<feature type="chain" id="PRO_0000206148" description="Splenin">
    <location>
        <begin position="1"/>
        <end position="49"/>
    </location>
</feature>
<feature type="domain" description="LEM-like" evidence="1">
    <location>
        <begin position="4"/>
        <end position="47"/>
    </location>
</feature>
<feature type="region of interest" description="Essential for biological activity">
    <location>
        <begin position="32"/>
        <end position="36"/>
    </location>
</feature>
<comment type="function">
    <text>Hormone of the spleen with pleiotropic actions on prothymocytes, mature T-cells, the nicotinic acetylcholine receptor, and pituitary corticotrophs.</text>
</comment>
<comment type="similarity">
    <text evidence="2">Belongs to the thymopoietin family.</text>
</comment>
<sequence length="49" mass="5639">PEFLEDPSVLTKEKLKSELVANNVTLPAGEQRKEVYVELYLQHLTALKR</sequence>
<gene>
    <name type="primary">SP</name>
</gene>
<protein>
    <recommendedName>
        <fullName>Splenin</fullName>
    </recommendedName>
    <alternativeName>
        <fullName>Thymopoietin III</fullName>
    </alternativeName>
</protein>
<accession>P01251</accession>
<proteinExistence type="evidence at protein level"/>
<keyword id="KW-0903">Direct protein sequencing</keyword>
<keyword id="KW-0372">Hormone</keyword>
<keyword id="KW-1185">Reference proteome</keyword>
<dbReference type="PIR" id="B01518">
    <property type="entry name" value="TOBO3"/>
</dbReference>
<dbReference type="SMR" id="P01251"/>
<dbReference type="STRING" id="9913.ENSBTAP00000048213"/>
<dbReference type="PaxDb" id="9913-ENSBTAP00000048213"/>
<dbReference type="eggNOG" id="ENOG502QWCI">
    <property type="taxonomic scope" value="Eukaryota"/>
</dbReference>
<dbReference type="InParanoid" id="P01251"/>
<dbReference type="Proteomes" id="UP000009136">
    <property type="component" value="Unplaced"/>
</dbReference>
<dbReference type="GO" id="GO:0003677">
    <property type="term" value="F:DNA binding"/>
    <property type="evidence" value="ECO:0007669"/>
    <property type="project" value="InterPro"/>
</dbReference>
<dbReference type="GO" id="GO:0005179">
    <property type="term" value="F:hormone activity"/>
    <property type="evidence" value="ECO:0007669"/>
    <property type="project" value="UniProtKB-KW"/>
</dbReference>
<dbReference type="FunFam" id="1.10.720.40:FF:000003">
    <property type="entry name" value="thymopoietin isoform X1"/>
    <property type="match status" value="1"/>
</dbReference>
<dbReference type="Gene3D" id="1.10.720.40">
    <property type="match status" value="1"/>
</dbReference>
<dbReference type="InterPro" id="IPR013146">
    <property type="entry name" value="LEM-like_dom"/>
</dbReference>
<dbReference type="InterPro" id="IPR011015">
    <property type="entry name" value="LEM/LEM-like_dom_sf"/>
</dbReference>
<dbReference type="InterPro" id="IPR051656">
    <property type="entry name" value="LEM_domain"/>
</dbReference>
<dbReference type="PANTHER" id="PTHR12019">
    <property type="entry name" value="LAMINA-ASSOCIATED POLYPEPTIDE THYMOPOIETIN"/>
    <property type="match status" value="1"/>
</dbReference>
<dbReference type="PANTHER" id="PTHR12019:SF9">
    <property type="entry name" value="THYMOPOIETIN"/>
    <property type="match status" value="1"/>
</dbReference>
<dbReference type="Pfam" id="PF08198">
    <property type="entry name" value="Thymopoietin"/>
    <property type="match status" value="1"/>
</dbReference>
<dbReference type="SMART" id="SM01261">
    <property type="entry name" value="Thymopoietin"/>
    <property type="match status" value="1"/>
</dbReference>
<dbReference type="SUPFAM" id="SSF63451">
    <property type="entry name" value="LEM domain"/>
    <property type="match status" value="1"/>
</dbReference>
<dbReference type="PROSITE" id="PS50955">
    <property type="entry name" value="LEM_LIKE"/>
    <property type="match status" value="1"/>
</dbReference>
<organism>
    <name type="scientific">Bos taurus</name>
    <name type="common">Bovine</name>
    <dbReference type="NCBI Taxonomy" id="9913"/>
    <lineage>
        <taxon>Eukaryota</taxon>
        <taxon>Metazoa</taxon>
        <taxon>Chordata</taxon>
        <taxon>Craniata</taxon>
        <taxon>Vertebrata</taxon>
        <taxon>Euteleostomi</taxon>
        <taxon>Mammalia</taxon>
        <taxon>Eutheria</taxon>
        <taxon>Laurasiatheria</taxon>
        <taxon>Artiodactyla</taxon>
        <taxon>Ruminantia</taxon>
        <taxon>Pecora</taxon>
        <taxon>Bovidae</taxon>
        <taxon>Bovinae</taxon>
        <taxon>Bos</taxon>
    </lineage>
</organism>
<reference key="1">
    <citation type="journal article" date="1981" name="Biochemistry">
        <title>Complete amino acid sequences of bovine thymopoietins I, II, and III: closely homologous polypeptides.</title>
        <authorList>
            <person name="Audhya T."/>
            <person name="Schlesinger D.H."/>
            <person name="Goldstein G."/>
        </authorList>
    </citation>
    <scope>PROTEIN SEQUENCE</scope>
</reference>
<evidence type="ECO:0000255" key="1">
    <source>
        <dbReference type="PROSITE-ProRule" id="PRU00314"/>
    </source>
</evidence>
<evidence type="ECO:0000305" key="2"/>
<name>THPS_BOVIN</name>